<keyword id="KW-0067">ATP-binding</keyword>
<keyword id="KW-0963">Cytoplasm</keyword>
<keyword id="KW-0227">DNA damage</keyword>
<keyword id="KW-0233">DNA recombination</keyword>
<keyword id="KW-0234">DNA repair</keyword>
<keyword id="KW-0238">DNA-binding</keyword>
<keyword id="KW-0547">Nucleotide-binding</keyword>
<keyword id="KW-1185">Reference proteome</keyword>
<keyword id="KW-0742">SOS response</keyword>
<sequence length="347" mass="37656">MDENKKRALSVALSQIEKQFGKGSVMRMGDRVIEAVEAIPTGSLMLDLALGIGGLPKGRVVEIYGPESSGKTTLTLQAIAQCQKRGGTAAFIDAEHALDPIYAGKLGVNVDDLLLSQPDTGEQALEIADMLVRSGSIDIMVIDSVAALTPRAEIEGEMGDQLPGLQARLMSQALRKLTGNIKRSNTLVIFINQLRMKIGIMMPGQSPETTTGGNALKFYASVRLDIRRIGAIKKGDEIIGNQTKIKVVKNKLAPPFKQVVTEILYGEGISREGELIEMGVEAKLVEKAGAWYSYGGERIGQGKDNARGYLRENPHFAAKLEADLREKFEPTELSREEGDEDTLEDAM</sequence>
<comment type="function">
    <text evidence="1">Can catalyze the hydrolysis of ATP in the presence of single-stranded DNA, the ATP-dependent uptake of single-stranded DNA by duplex DNA, and the ATP-dependent hybridization of homologous single-stranded DNAs. It interacts with LexA causing its activation and leading to its autocatalytic cleavage.</text>
</comment>
<comment type="subcellular location">
    <subcellularLocation>
        <location evidence="1">Cytoplasm</location>
    </subcellularLocation>
</comment>
<comment type="similarity">
    <text evidence="1">Belongs to the RecA family.</text>
</comment>
<proteinExistence type="inferred from homology"/>
<reference key="1">
    <citation type="journal article" date="2003" name="J. Bacteriol.">
        <title>Comparative analyses of the complete genome sequences of Pierce's disease and citrus variegated chlorosis strains of Xylella fastidiosa.</title>
        <authorList>
            <person name="Van Sluys M.A."/>
            <person name="de Oliveira M.C."/>
            <person name="Monteiro-Vitorello C.B."/>
            <person name="Miyaki C.Y."/>
            <person name="Furlan L.R."/>
            <person name="Camargo L.E.A."/>
            <person name="da Silva A.C.R."/>
            <person name="Moon D.H."/>
            <person name="Takita M.A."/>
            <person name="Lemos E.G.M."/>
            <person name="Machado M.A."/>
            <person name="Ferro M.I.T."/>
            <person name="da Silva F.R."/>
            <person name="Goldman M.H.S."/>
            <person name="Goldman G.H."/>
            <person name="Lemos M.V.F."/>
            <person name="El-Dorry H."/>
            <person name="Tsai S.M."/>
            <person name="Carrer H."/>
            <person name="Carraro D.M."/>
            <person name="de Oliveira R.C."/>
            <person name="Nunes L.R."/>
            <person name="Siqueira W.J."/>
            <person name="Coutinho L.L."/>
            <person name="Kimura E.T."/>
            <person name="Ferro E.S."/>
            <person name="Harakava R."/>
            <person name="Kuramae E.E."/>
            <person name="Marino C.L."/>
            <person name="Giglioti E."/>
            <person name="Abreu I.L."/>
            <person name="Alves L.M.C."/>
            <person name="do Amaral A.M."/>
            <person name="Baia G.S."/>
            <person name="Blanco S.R."/>
            <person name="Brito M.S."/>
            <person name="Cannavan F.S."/>
            <person name="Celestino A.V."/>
            <person name="da Cunha A.F."/>
            <person name="Fenille R.C."/>
            <person name="Ferro J.A."/>
            <person name="Formighieri E.F."/>
            <person name="Kishi L.T."/>
            <person name="Leoni S.G."/>
            <person name="Oliveira A.R."/>
            <person name="Rosa V.E. Jr."/>
            <person name="Sassaki F.T."/>
            <person name="Sena J.A.D."/>
            <person name="de Souza A.A."/>
            <person name="Truffi D."/>
            <person name="Tsukumo F."/>
            <person name="Yanai G.M."/>
            <person name="Zaros L.G."/>
            <person name="Civerolo E.L."/>
            <person name="Simpson A.J.G."/>
            <person name="Almeida N.F. Jr."/>
            <person name="Setubal J.C."/>
            <person name="Kitajima J.P."/>
        </authorList>
    </citation>
    <scope>NUCLEOTIDE SEQUENCE [LARGE SCALE GENOMIC DNA]</scope>
    <source>
        <strain>Temecula1 / ATCC 700964</strain>
    </source>
</reference>
<dbReference type="EMBL" id="AE009442">
    <property type="protein sequence ID" value="AAO27993.1"/>
    <property type="molecule type" value="Genomic_DNA"/>
</dbReference>
<dbReference type="RefSeq" id="WP_004087616.1">
    <property type="nucleotide sequence ID" value="NC_004556.1"/>
</dbReference>
<dbReference type="SMR" id="Q87F44"/>
<dbReference type="GeneID" id="93903784"/>
<dbReference type="KEGG" id="xft:PD_0093"/>
<dbReference type="HOGENOM" id="CLU_040469_3_2_6"/>
<dbReference type="Proteomes" id="UP000002516">
    <property type="component" value="Chromosome"/>
</dbReference>
<dbReference type="GO" id="GO:0005829">
    <property type="term" value="C:cytosol"/>
    <property type="evidence" value="ECO:0007669"/>
    <property type="project" value="TreeGrafter"/>
</dbReference>
<dbReference type="GO" id="GO:0005524">
    <property type="term" value="F:ATP binding"/>
    <property type="evidence" value="ECO:0007669"/>
    <property type="project" value="UniProtKB-UniRule"/>
</dbReference>
<dbReference type="GO" id="GO:0016887">
    <property type="term" value="F:ATP hydrolysis activity"/>
    <property type="evidence" value="ECO:0007669"/>
    <property type="project" value="InterPro"/>
</dbReference>
<dbReference type="GO" id="GO:0140664">
    <property type="term" value="F:ATP-dependent DNA damage sensor activity"/>
    <property type="evidence" value="ECO:0007669"/>
    <property type="project" value="InterPro"/>
</dbReference>
<dbReference type="GO" id="GO:0003684">
    <property type="term" value="F:damaged DNA binding"/>
    <property type="evidence" value="ECO:0007669"/>
    <property type="project" value="UniProtKB-UniRule"/>
</dbReference>
<dbReference type="GO" id="GO:0003697">
    <property type="term" value="F:single-stranded DNA binding"/>
    <property type="evidence" value="ECO:0007669"/>
    <property type="project" value="UniProtKB-UniRule"/>
</dbReference>
<dbReference type="GO" id="GO:0006310">
    <property type="term" value="P:DNA recombination"/>
    <property type="evidence" value="ECO:0007669"/>
    <property type="project" value="UniProtKB-UniRule"/>
</dbReference>
<dbReference type="GO" id="GO:0006281">
    <property type="term" value="P:DNA repair"/>
    <property type="evidence" value="ECO:0007669"/>
    <property type="project" value="UniProtKB-UniRule"/>
</dbReference>
<dbReference type="GO" id="GO:0009432">
    <property type="term" value="P:SOS response"/>
    <property type="evidence" value="ECO:0007669"/>
    <property type="project" value="UniProtKB-UniRule"/>
</dbReference>
<dbReference type="CDD" id="cd00983">
    <property type="entry name" value="RecA"/>
    <property type="match status" value="1"/>
</dbReference>
<dbReference type="FunFam" id="3.40.50.300:FF:000087">
    <property type="entry name" value="Recombinase RecA"/>
    <property type="match status" value="1"/>
</dbReference>
<dbReference type="Gene3D" id="3.40.50.300">
    <property type="entry name" value="P-loop containing nucleotide triphosphate hydrolases"/>
    <property type="match status" value="1"/>
</dbReference>
<dbReference type="HAMAP" id="MF_00268">
    <property type="entry name" value="RecA"/>
    <property type="match status" value="1"/>
</dbReference>
<dbReference type="InterPro" id="IPR003593">
    <property type="entry name" value="AAA+_ATPase"/>
</dbReference>
<dbReference type="InterPro" id="IPR013765">
    <property type="entry name" value="DNA_recomb/repair_RecA"/>
</dbReference>
<dbReference type="InterPro" id="IPR020584">
    <property type="entry name" value="DNA_recomb/repair_RecA_CS"/>
</dbReference>
<dbReference type="InterPro" id="IPR027417">
    <property type="entry name" value="P-loop_NTPase"/>
</dbReference>
<dbReference type="InterPro" id="IPR049261">
    <property type="entry name" value="RecA-like_C"/>
</dbReference>
<dbReference type="InterPro" id="IPR049428">
    <property type="entry name" value="RecA-like_N"/>
</dbReference>
<dbReference type="InterPro" id="IPR020588">
    <property type="entry name" value="RecA_ATP-bd"/>
</dbReference>
<dbReference type="InterPro" id="IPR023400">
    <property type="entry name" value="RecA_C_sf"/>
</dbReference>
<dbReference type="InterPro" id="IPR020587">
    <property type="entry name" value="RecA_monomer-monomer_interface"/>
</dbReference>
<dbReference type="NCBIfam" id="TIGR02012">
    <property type="entry name" value="tigrfam_recA"/>
    <property type="match status" value="1"/>
</dbReference>
<dbReference type="PANTHER" id="PTHR45900:SF1">
    <property type="entry name" value="MITOCHONDRIAL DNA REPAIR PROTEIN RECA HOMOLOG-RELATED"/>
    <property type="match status" value="1"/>
</dbReference>
<dbReference type="PANTHER" id="PTHR45900">
    <property type="entry name" value="RECA"/>
    <property type="match status" value="1"/>
</dbReference>
<dbReference type="Pfam" id="PF00154">
    <property type="entry name" value="RecA"/>
    <property type="match status" value="1"/>
</dbReference>
<dbReference type="Pfam" id="PF21096">
    <property type="entry name" value="RecA_C"/>
    <property type="match status" value="1"/>
</dbReference>
<dbReference type="PRINTS" id="PR00142">
    <property type="entry name" value="RECA"/>
</dbReference>
<dbReference type="SMART" id="SM00382">
    <property type="entry name" value="AAA"/>
    <property type="match status" value="1"/>
</dbReference>
<dbReference type="SUPFAM" id="SSF52540">
    <property type="entry name" value="P-loop containing nucleoside triphosphate hydrolases"/>
    <property type="match status" value="1"/>
</dbReference>
<dbReference type="SUPFAM" id="SSF54752">
    <property type="entry name" value="RecA protein, C-terminal domain"/>
    <property type="match status" value="1"/>
</dbReference>
<dbReference type="PROSITE" id="PS00321">
    <property type="entry name" value="RECA_1"/>
    <property type="match status" value="1"/>
</dbReference>
<dbReference type="PROSITE" id="PS50162">
    <property type="entry name" value="RECA_2"/>
    <property type="match status" value="1"/>
</dbReference>
<dbReference type="PROSITE" id="PS50163">
    <property type="entry name" value="RECA_3"/>
    <property type="match status" value="1"/>
</dbReference>
<accession>Q87F44</accession>
<evidence type="ECO:0000255" key="1">
    <source>
        <dbReference type="HAMAP-Rule" id="MF_00268"/>
    </source>
</evidence>
<evidence type="ECO:0000256" key="2">
    <source>
        <dbReference type="SAM" id="MobiDB-lite"/>
    </source>
</evidence>
<protein>
    <recommendedName>
        <fullName evidence="1">Protein RecA</fullName>
    </recommendedName>
    <alternativeName>
        <fullName evidence="1">Recombinase A</fullName>
    </alternativeName>
</protein>
<gene>
    <name evidence="1" type="primary">recA</name>
    <name type="ordered locus">PD_0093</name>
</gene>
<feature type="chain" id="PRO_0000122909" description="Protein RecA">
    <location>
        <begin position="1"/>
        <end position="347"/>
    </location>
</feature>
<feature type="region of interest" description="Disordered" evidence="2">
    <location>
        <begin position="327"/>
        <end position="347"/>
    </location>
</feature>
<feature type="compositionally biased region" description="Basic and acidic residues" evidence="2">
    <location>
        <begin position="327"/>
        <end position="336"/>
    </location>
</feature>
<feature type="compositionally biased region" description="Acidic residues" evidence="2">
    <location>
        <begin position="337"/>
        <end position="347"/>
    </location>
</feature>
<feature type="binding site" evidence="1">
    <location>
        <begin position="65"/>
        <end position="72"/>
    </location>
    <ligand>
        <name>ATP</name>
        <dbReference type="ChEBI" id="CHEBI:30616"/>
    </ligand>
</feature>
<name>RECA_XYLFT</name>
<organism>
    <name type="scientific">Xylella fastidiosa (strain Temecula1 / ATCC 700964)</name>
    <dbReference type="NCBI Taxonomy" id="183190"/>
    <lineage>
        <taxon>Bacteria</taxon>
        <taxon>Pseudomonadati</taxon>
        <taxon>Pseudomonadota</taxon>
        <taxon>Gammaproteobacteria</taxon>
        <taxon>Lysobacterales</taxon>
        <taxon>Lysobacteraceae</taxon>
        <taxon>Xylella</taxon>
    </lineage>
</organism>